<reference key="1">
    <citation type="submission" date="2001-05" db="EMBL/GenBank/DDBJ databases">
        <title>Identification and expression of cDNA and pseudogene coding for the rabbit mitochondrial single-strand DNA-binding protein.</title>
        <authorList>
            <person name="Dufresne C."/>
            <person name="Gueride M."/>
        </authorList>
    </citation>
    <scope>NUCLEOTIDE SEQUENCE [MRNA]</scope>
</reference>
<proteinExistence type="evidence at transcript level"/>
<evidence type="ECO:0000250" key="1">
    <source>
        <dbReference type="UniProtKB" id="Q04837"/>
    </source>
</evidence>
<evidence type="ECO:0000250" key="2">
    <source>
        <dbReference type="UniProtKB" id="Q9CYR0"/>
    </source>
</evidence>
<dbReference type="EMBL" id="AJ311162">
    <property type="protein sequence ID" value="CAC38115.1"/>
    <property type="molecule type" value="mRNA"/>
</dbReference>
<dbReference type="RefSeq" id="NP_001075600.1">
    <property type="nucleotide sequence ID" value="NM_001082131.1"/>
</dbReference>
<dbReference type="SMR" id="Q95KK4"/>
<dbReference type="FunCoup" id="Q95KK4">
    <property type="interactions" value="1450"/>
</dbReference>
<dbReference type="STRING" id="9986.ENSOCUP00000021419"/>
<dbReference type="PaxDb" id="9986-ENSOCUP00000021419"/>
<dbReference type="GeneID" id="100008866"/>
<dbReference type="KEGG" id="ocu:100008866"/>
<dbReference type="CTD" id="6742"/>
<dbReference type="eggNOG" id="KOG1653">
    <property type="taxonomic scope" value="Eukaryota"/>
</dbReference>
<dbReference type="InParanoid" id="Q95KK4"/>
<dbReference type="OrthoDB" id="1078367at2759"/>
<dbReference type="Proteomes" id="UP000001811">
    <property type="component" value="Unplaced"/>
</dbReference>
<dbReference type="GO" id="GO:0042645">
    <property type="term" value="C:mitochondrial nucleoid"/>
    <property type="evidence" value="ECO:0000250"/>
    <property type="project" value="UniProtKB"/>
</dbReference>
<dbReference type="GO" id="GO:0005739">
    <property type="term" value="C:mitochondrion"/>
    <property type="evidence" value="ECO:0000250"/>
    <property type="project" value="UniProtKB"/>
</dbReference>
<dbReference type="GO" id="GO:0003682">
    <property type="term" value="F:chromatin binding"/>
    <property type="evidence" value="ECO:0000250"/>
    <property type="project" value="UniProtKB"/>
</dbReference>
<dbReference type="GO" id="GO:0003697">
    <property type="term" value="F:single-stranded DNA binding"/>
    <property type="evidence" value="ECO:0000250"/>
    <property type="project" value="UniProtKB"/>
</dbReference>
<dbReference type="GO" id="GO:0006264">
    <property type="term" value="P:mitochondrial DNA replication"/>
    <property type="evidence" value="ECO:0007669"/>
    <property type="project" value="TreeGrafter"/>
</dbReference>
<dbReference type="GO" id="GO:0090297">
    <property type="term" value="P:positive regulation of mitochondrial DNA replication"/>
    <property type="evidence" value="ECO:0000250"/>
    <property type="project" value="UniProtKB"/>
</dbReference>
<dbReference type="GO" id="GO:0051289">
    <property type="term" value="P:protein homotetramerization"/>
    <property type="evidence" value="ECO:0000250"/>
    <property type="project" value="UniProtKB"/>
</dbReference>
<dbReference type="CDD" id="cd04496">
    <property type="entry name" value="SSB_OBF"/>
    <property type="match status" value="1"/>
</dbReference>
<dbReference type="FunFam" id="2.40.50.140:FF:000129">
    <property type="entry name" value="Single-stranded DNA-binding protein 1, mitochondrial"/>
    <property type="match status" value="1"/>
</dbReference>
<dbReference type="Gene3D" id="2.40.50.140">
    <property type="entry name" value="Nucleic acid-binding proteins"/>
    <property type="match status" value="1"/>
</dbReference>
<dbReference type="HAMAP" id="MF_00984">
    <property type="entry name" value="SSB"/>
    <property type="match status" value="1"/>
</dbReference>
<dbReference type="InterPro" id="IPR012340">
    <property type="entry name" value="NA-bd_OB-fold"/>
</dbReference>
<dbReference type="InterPro" id="IPR000424">
    <property type="entry name" value="Primosome_PriB/ssb"/>
</dbReference>
<dbReference type="InterPro" id="IPR011344">
    <property type="entry name" value="ssDNA-bd"/>
</dbReference>
<dbReference type="NCBIfam" id="TIGR00621">
    <property type="entry name" value="ssb"/>
    <property type="match status" value="1"/>
</dbReference>
<dbReference type="PANTHER" id="PTHR10302">
    <property type="entry name" value="SINGLE-STRANDED DNA-BINDING PROTEIN"/>
    <property type="match status" value="1"/>
</dbReference>
<dbReference type="PANTHER" id="PTHR10302:SF0">
    <property type="entry name" value="SINGLE-STRANDED DNA-BINDING PROTEIN, MITOCHONDRIAL"/>
    <property type="match status" value="1"/>
</dbReference>
<dbReference type="Pfam" id="PF00436">
    <property type="entry name" value="SSB"/>
    <property type="match status" value="1"/>
</dbReference>
<dbReference type="PIRSF" id="PIRSF002070">
    <property type="entry name" value="SSB"/>
    <property type="match status" value="1"/>
</dbReference>
<dbReference type="SUPFAM" id="SSF50249">
    <property type="entry name" value="Nucleic acid-binding proteins"/>
    <property type="match status" value="1"/>
</dbReference>
<dbReference type="PROSITE" id="PS50935">
    <property type="entry name" value="SSB"/>
    <property type="match status" value="1"/>
</dbReference>
<sequence length="148" mass="17156">MFRRPALQVLRQFVRHESEIASSLVLERSLNRVQLLGRVGQDPVMRQVEGKNPVTIFSLATNEMWRSGDNETYQMGDVSQKTTWHRISVFRPGLRDVAYQYVKKGSRIYVEGKVDYGEYMDKNNVRRQATTIIADNIVFLSDQTKEKA</sequence>
<protein>
    <recommendedName>
        <fullName>Single-stranded DNA-binding protein, mitochondrial</fullName>
        <shortName>Mt-SSB</shortName>
        <shortName>MtSSB</shortName>
    </recommendedName>
</protein>
<organism>
    <name type="scientific">Oryctolagus cuniculus</name>
    <name type="common">Rabbit</name>
    <dbReference type="NCBI Taxonomy" id="9986"/>
    <lineage>
        <taxon>Eukaryota</taxon>
        <taxon>Metazoa</taxon>
        <taxon>Chordata</taxon>
        <taxon>Craniata</taxon>
        <taxon>Vertebrata</taxon>
        <taxon>Euteleostomi</taxon>
        <taxon>Mammalia</taxon>
        <taxon>Eutheria</taxon>
        <taxon>Euarchontoglires</taxon>
        <taxon>Glires</taxon>
        <taxon>Lagomorpha</taxon>
        <taxon>Leporidae</taxon>
        <taxon>Oryctolagus</taxon>
    </lineage>
</organism>
<keyword id="KW-0007">Acetylation</keyword>
<keyword id="KW-0235">DNA replication</keyword>
<keyword id="KW-0238">DNA-binding</keyword>
<keyword id="KW-0496">Mitochondrion</keyword>
<keyword id="KW-1135">Mitochondrion nucleoid</keyword>
<keyword id="KW-0597">Phosphoprotein</keyword>
<keyword id="KW-1185">Reference proteome</keyword>
<keyword id="KW-0809">Transit peptide</keyword>
<comment type="function">
    <text evidence="1">Binds preferentially and cooperatively to pyrimidine rich single-stranded DNA (ss-DNA). In vitro, required to maintain the copy number of mitochondrial DNA (mtDNA) and plays a crucial role during mtDNA replication by stimulating the activity of the replisome components POLG and TWNK at the replication fork. Promotes the activity of the gamma complex polymerase POLG, largely by organizing the template DNA and eliminating secondary structures to favor ss-DNA conformations that facilitate POLG activity. In addition it is able to promote the 5'-3' unwinding activity of the mtDNA helicase TWNK. May also function in mtDNA repair.</text>
</comment>
<comment type="subunit">
    <text evidence="1">Homotetramer. Interacts with MPG/AAG, through inhibition of its glycosylase activity it potentially prevents formation of DNA breaks in ssDNA, ensuring that base removal primarily occurs in dsDNA. Interacts with POLDIP2. Interacts with PRIMPOL.</text>
</comment>
<comment type="subcellular location">
    <subcellularLocation>
        <location evidence="1">Mitochondrion</location>
    </subcellularLocation>
    <subcellularLocation>
        <location evidence="1">Mitochondrion matrix</location>
        <location evidence="1">Mitochondrion nucleoid</location>
    </subcellularLocation>
</comment>
<gene>
    <name type="primary">SSBP1</name>
    <name type="synonym">SSB</name>
</gene>
<name>SSBP_RABIT</name>
<feature type="transit peptide" description="Mitochondrion" evidence="1">
    <location>
        <begin position="1"/>
        <end position="16"/>
    </location>
</feature>
<feature type="chain" id="PRO_5000067449" description="Single-stranded DNA-binding protein, mitochondrial">
    <location>
        <begin position="17"/>
        <end position="148"/>
    </location>
</feature>
<feature type="domain" description="SSB">
    <location>
        <begin position="30"/>
        <end position="141"/>
    </location>
</feature>
<feature type="modified residue" description="Phosphoserine" evidence="2">
    <location>
        <position position="67"/>
    </location>
</feature>
<feature type="modified residue" description="Phosphoserine" evidence="1">
    <location>
        <position position="79"/>
    </location>
</feature>
<feature type="modified residue" description="N6-acetyllysine" evidence="1">
    <location>
        <position position="113"/>
    </location>
</feature>
<feature type="modified residue" description="N6-succinyllysine" evidence="2">
    <location>
        <position position="122"/>
    </location>
</feature>
<accession>Q95KK4</accession>